<keyword id="KW-0007">Acetylation</keyword>
<keyword id="KW-0408">Iron</keyword>
<keyword id="KW-0479">Metal-binding</keyword>
<keyword id="KW-0560">Oxidoreductase</keyword>
<keyword id="KW-1185">Reference proteome</keyword>
<gene>
    <name type="primary">sodB</name>
    <name type="ordered locus">Z2678</name>
    <name type="ordered locus">ECs2365</name>
</gene>
<comment type="function">
    <text evidence="1">Destroys superoxide anion radicals which are normally produced within the cells and which are toxic to biological systems.</text>
</comment>
<comment type="catalytic activity">
    <reaction>
        <text>2 superoxide + 2 H(+) = H2O2 + O2</text>
        <dbReference type="Rhea" id="RHEA:20696"/>
        <dbReference type="ChEBI" id="CHEBI:15378"/>
        <dbReference type="ChEBI" id="CHEBI:15379"/>
        <dbReference type="ChEBI" id="CHEBI:16240"/>
        <dbReference type="ChEBI" id="CHEBI:18421"/>
        <dbReference type="EC" id="1.15.1.1"/>
    </reaction>
</comment>
<comment type="cofactor">
    <cofactor evidence="1">
        <name>Fe cation</name>
        <dbReference type="ChEBI" id="CHEBI:24875"/>
    </cofactor>
    <text evidence="1">Binds 1 Fe cation per subunit.</text>
</comment>
<comment type="subunit">
    <text evidence="1">Homodimer.</text>
</comment>
<comment type="similarity">
    <text evidence="2">Belongs to the iron/manganese superoxide dismutase family.</text>
</comment>
<accession>P0AGD5</accession>
<accession>P09157</accession>
<dbReference type="EC" id="1.15.1.1"/>
<dbReference type="EMBL" id="AE005174">
    <property type="protein sequence ID" value="AAG56645.1"/>
    <property type="molecule type" value="Genomic_DNA"/>
</dbReference>
<dbReference type="EMBL" id="BA000007">
    <property type="protein sequence ID" value="BAB35788.1"/>
    <property type="molecule type" value="Genomic_DNA"/>
</dbReference>
<dbReference type="PIR" id="A85773">
    <property type="entry name" value="A85773"/>
</dbReference>
<dbReference type="PIR" id="E90924">
    <property type="entry name" value="E90924"/>
</dbReference>
<dbReference type="RefSeq" id="NP_310392.1">
    <property type="nucleotide sequence ID" value="NC_002695.1"/>
</dbReference>
<dbReference type="RefSeq" id="WP_000007283.1">
    <property type="nucleotide sequence ID" value="NZ_VOAI01000007.1"/>
</dbReference>
<dbReference type="BMRB" id="P0AGD5"/>
<dbReference type="SMR" id="P0AGD5"/>
<dbReference type="STRING" id="155864.Z2678"/>
<dbReference type="GeneID" id="912540"/>
<dbReference type="GeneID" id="93775810"/>
<dbReference type="KEGG" id="ece:Z2678"/>
<dbReference type="KEGG" id="ecs:ECs_2365"/>
<dbReference type="PATRIC" id="fig|386585.9.peg.2476"/>
<dbReference type="eggNOG" id="COG0605">
    <property type="taxonomic scope" value="Bacteria"/>
</dbReference>
<dbReference type="HOGENOM" id="CLU_031625_0_0_6"/>
<dbReference type="OMA" id="DSLINWD"/>
<dbReference type="Proteomes" id="UP000000558">
    <property type="component" value="Chromosome"/>
</dbReference>
<dbReference type="Proteomes" id="UP000002519">
    <property type="component" value="Chromosome"/>
</dbReference>
<dbReference type="GO" id="GO:0046872">
    <property type="term" value="F:metal ion binding"/>
    <property type="evidence" value="ECO:0007669"/>
    <property type="project" value="UniProtKB-KW"/>
</dbReference>
<dbReference type="GO" id="GO:0004784">
    <property type="term" value="F:superoxide dismutase activity"/>
    <property type="evidence" value="ECO:0007669"/>
    <property type="project" value="UniProtKB-EC"/>
</dbReference>
<dbReference type="FunFam" id="1.10.287.990:FF:000002">
    <property type="entry name" value="Superoxide dismutase"/>
    <property type="match status" value="1"/>
</dbReference>
<dbReference type="FunFam" id="3.55.40.20:FF:000001">
    <property type="entry name" value="Superoxide dismutase"/>
    <property type="match status" value="1"/>
</dbReference>
<dbReference type="Gene3D" id="1.10.287.990">
    <property type="entry name" value="Fe,Mn superoxide dismutase (SOD) domain"/>
    <property type="match status" value="1"/>
</dbReference>
<dbReference type="Gene3D" id="3.55.40.20">
    <property type="entry name" value="Iron/manganese superoxide dismutase, C-terminal domain"/>
    <property type="match status" value="1"/>
</dbReference>
<dbReference type="InterPro" id="IPR001189">
    <property type="entry name" value="Mn/Fe_SOD"/>
</dbReference>
<dbReference type="InterPro" id="IPR019833">
    <property type="entry name" value="Mn/Fe_SOD_BS"/>
</dbReference>
<dbReference type="InterPro" id="IPR019832">
    <property type="entry name" value="Mn/Fe_SOD_C"/>
</dbReference>
<dbReference type="InterPro" id="IPR019831">
    <property type="entry name" value="Mn/Fe_SOD_N"/>
</dbReference>
<dbReference type="InterPro" id="IPR036324">
    <property type="entry name" value="Mn/Fe_SOD_N_sf"/>
</dbReference>
<dbReference type="InterPro" id="IPR036314">
    <property type="entry name" value="SOD_C_sf"/>
</dbReference>
<dbReference type="NCBIfam" id="NF007832">
    <property type="entry name" value="PRK10543.1"/>
    <property type="match status" value="1"/>
</dbReference>
<dbReference type="PANTHER" id="PTHR42769">
    <property type="entry name" value="SUPEROXIDE DISMUTASE"/>
    <property type="match status" value="1"/>
</dbReference>
<dbReference type="PANTHER" id="PTHR42769:SF3">
    <property type="entry name" value="SUPEROXIDE DISMUTASE [FE] 2, CHLOROPLASTIC"/>
    <property type="match status" value="1"/>
</dbReference>
<dbReference type="Pfam" id="PF02777">
    <property type="entry name" value="Sod_Fe_C"/>
    <property type="match status" value="1"/>
</dbReference>
<dbReference type="Pfam" id="PF00081">
    <property type="entry name" value="Sod_Fe_N"/>
    <property type="match status" value="1"/>
</dbReference>
<dbReference type="PIRSF" id="PIRSF000349">
    <property type="entry name" value="SODismutase"/>
    <property type="match status" value="1"/>
</dbReference>
<dbReference type="PRINTS" id="PR01703">
    <property type="entry name" value="MNSODISMTASE"/>
</dbReference>
<dbReference type="SUPFAM" id="SSF54719">
    <property type="entry name" value="Fe,Mn superoxide dismutase (SOD), C-terminal domain"/>
    <property type="match status" value="1"/>
</dbReference>
<dbReference type="SUPFAM" id="SSF46609">
    <property type="entry name" value="Fe,Mn superoxide dismutase (SOD), N-terminal domain"/>
    <property type="match status" value="1"/>
</dbReference>
<dbReference type="PROSITE" id="PS00088">
    <property type="entry name" value="SOD_MN"/>
    <property type="match status" value="1"/>
</dbReference>
<reference key="1">
    <citation type="journal article" date="2001" name="Nature">
        <title>Genome sequence of enterohaemorrhagic Escherichia coli O157:H7.</title>
        <authorList>
            <person name="Perna N.T."/>
            <person name="Plunkett G. III"/>
            <person name="Burland V."/>
            <person name="Mau B."/>
            <person name="Glasner J.D."/>
            <person name="Rose D.J."/>
            <person name="Mayhew G.F."/>
            <person name="Evans P.S."/>
            <person name="Gregor J."/>
            <person name="Kirkpatrick H.A."/>
            <person name="Posfai G."/>
            <person name="Hackett J."/>
            <person name="Klink S."/>
            <person name="Boutin A."/>
            <person name="Shao Y."/>
            <person name="Miller L."/>
            <person name="Grotbeck E.J."/>
            <person name="Davis N.W."/>
            <person name="Lim A."/>
            <person name="Dimalanta E.T."/>
            <person name="Potamousis K."/>
            <person name="Apodaca J."/>
            <person name="Anantharaman T.S."/>
            <person name="Lin J."/>
            <person name="Yen G."/>
            <person name="Schwartz D.C."/>
            <person name="Welch R.A."/>
            <person name="Blattner F.R."/>
        </authorList>
    </citation>
    <scope>NUCLEOTIDE SEQUENCE [LARGE SCALE GENOMIC DNA]</scope>
    <source>
        <strain>O157:H7 / EDL933 / ATCC 700927 / EHEC</strain>
    </source>
</reference>
<reference key="2">
    <citation type="journal article" date="2001" name="DNA Res.">
        <title>Complete genome sequence of enterohemorrhagic Escherichia coli O157:H7 and genomic comparison with a laboratory strain K-12.</title>
        <authorList>
            <person name="Hayashi T."/>
            <person name="Makino K."/>
            <person name="Ohnishi M."/>
            <person name="Kurokawa K."/>
            <person name="Ishii K."/>
            <person name="Yokoyama K."/>
            <person name="Han C.-G."/>
            <person name="Ohtsubo E."/>
            <person name="Nakayama K."/>
            <person name="Murata T."/>
            <person name="Tanaka M."/>
            <person name="Tobe T."/>
            <person name="Iida T."/>
            <person name="Takami H."/>
            <person name="Honda T."/>
            <person name="Sasakawa C."/>
            <person name="Ogasawara N."/>
            <person name="Yasunaga T."/>
            <person name="Kuhara S."/>
            <person name="Shiba T."/>
            <person name="Hattori M."/>
            <person name="Shinagawa H."/>
        </authorList>
    </citation>
    <scope>NUCLEOTIDE SEQUENCE [LARGE SCALE GENOMIC DNA]</scope>
    <source>
        <strain>O157:H7 / Sakai / RIMD 0509952 / EHEC</strain>
    </source>
</reference>
<protein>
    <recommendedName>
        <fullName>Superoxide dismutase [Fe]</fullName>
        <ecNumber>1.15.1.1</ecNumber>
    </recommendedName>
</protein>
<feature type="initiator methionine" description="Removed" evidence="1">
    <location>
        <position position="1"/>
    </location>
</feature>
<feature type="chain" id="PRO_0000159980" description="Superoxide dismutase [Fe]">
    <location>
        <begin position="2"/>
        <end position="193"/>
    </location>
</feature>
<feature type="binding site" evidence="1">
    <location>
        <position position="27"/>
    </location>
    <ligand>
        <name>Fe cation</name>
        <dbReference type="ChEBI" id="CHEBI:24875"/>
    </ligand>
</feature>
<feature type="binding site" evidence="1">
    <location>
        <position position="74"/>
    </location>
    <ligand>
        <name>Fe cation</name>
        <dbReference type="ChEBI" id="CHEBI:24875"/>
    </ligand>
</feature>
<feature type="binding site" evidence="1">
    <location>
        <position position="157"/>
    </location>
    <ligand>
        <name>Fe cation</name>
        <dbReference type="ChEBI" id="CHEBI:24875"/>
    </ligand>
</feature>
<feature type="binding site" evidence="1">
    <location>
        <position position="161"/>
    </location>
    <ligand>
        <name>Fe cation</name>
        <dbReference type="ChEBI" id="CHEBI:24875"/>
    </ligand>
</feature>
<feature type="modified residue" description="N6-acetyllysine" evidence="1">
    <location>
        <position position="51"/>
    </location>
</feature>
<proteinExistence type="inferred from homology"/>
<sequence>MSFELPALPYAKDALAPHISAETIEYHYGKHHQTYVTNLNNLIKGTAFEGKSLEEIIRSSEGGVFNNAAQVWNHTFYWNCLAPNAGGEPTGKVAEAIAASFGSFADFKAQFTDAAIKNFGSGWTWLVKNSDGKLAIVSTSNAGTPLTTDATPLLTVDVWEHAYYIDYRNARPGYLEHFWALVNWEFVAKNLAA</sequence>
<evidence type="ECO:0000250" key="1"/>
<evidence type="ECO:0000305" key="2"/>
<name>SODF_ECO57</name>
<organism>
    <name type="scientific">Escherichia coli O157:H7</name>
    <dbReference type="NCBI Taxonomy" id="83334"/>
    <lineage>
        <taxon>Bacteria</taxon>
        <taxon>Pseudomonadati</taxon>
        <taxon>Pseudomonadota</taxon>
        <taxon>Gammaproteobacteria</taxon>
        <taxon>Enterobacterales</taxon>
        <taxon>Enterobacteriaceae</taxon>
        <taxon>Escherichia</taxon>
    </lineage>
</organism>